<organism>
    <name type="scientific">Salmonella typhimurium (strain LT2 / SGSC1412 / ATCC 700720)</name>
    <dbReference type="NCBI Taxonomy" id="99287"/>
    <lineage>
        <taxon>Bacteria</taxon>
        <taxon>Pseudomonadati</taxon>
        <taxon>Pseudomonadota</taxon>
        <taxon>Gammaproteobacteria</taxon>
        <taxon>Enterobacterales</taxon>
        <taxon>Enterobacteriaceae</taxon>
        <taxon>Salmonella</taxon>
    </lineage>
</organism>
<proteinExistence type="evidence at transcript level"/>
<feature type="signal peptide" evidence="1">
    <location>
        <begin position="1"/>
        <end position="16"/>
    </location>
</feature>
<feature type="chain" id="PRO_0000417587" description="Uncharacterized lipoprotein ChiQ">
    <location>
        <begin position="17"/>
        <end position="110"/>
    </location>
</feature>
<feature type="lipid moiety-binding region" description="N-palmitoyl cysteine" evidence="1">
    <location>
        <position position="17"/>
    </location>
</feature>
<feature type="lipid moiety-binding region" description="S-diacylglycerol cysteine" evidence="1">
    <location>
        <position position="17"/>
    </location>
</feature>
<keyword id="KW-1003">Cell membrane</keyword>
<keyword id="KW-0449">Lipoprotein</keyword>
<keyword id="KW-0472">Membrane</keyword>
<keyword id="KW-0564">Palmitate</keyword>
<keyword id="KW-1185">Reference proteome</keyword>
<keyword id="KW-0732">Signal</keyword>
<comment type="subcellular location">
    <subcellularLocation>
        <location evidence="1">Cell membrane</location>
        <topology evidence="1">Lipid-anchor</topology>
    </subcellularLocation>
</comment>
<comment type="induction">
    <text evidence="2">In the absence of chitobiose, expression of chiPQ is silenced by the ChiX small regulatory RNA (sRNA), which sequesters the ribosome binding site of the chiPQ mRNA by an antisense mechanism. In the presence of chitosugars, the chbBCARFG chitobiose operon is induced and acts as an RNA trap to degrade the constitutively expressed ChiX, leading to the translation of chiPQ. Chitobiose and chitotriose also induce chiP mRNA synthesis.</text>
</comment>
<comment type="miscellaneous">
    <text evidence="3">ChiQ appears dispensable for growth on either chitobiose or chitotriose.</text>
</comment>
<gene>
    <name type="primary">chiQ</name>
    <name type="ordered locus">STM0688</name>
</gene>
<reference key="1">
    <citation type="journal article" date="2001" name="Nature">
        <title>Complete genome sequence of Salmonella enterica serovar Typhimurium LT2.</title>
        <authorList>
            <person name="McClelland M."/>
            <person name="Sanderson K.E."/>
            <person name="Spieth J."/>
            <person name="Clifton S.W."/>
            <person name="Latreille P."/>
            <person name="Courtney L."/>
            <person name="Porwollik S."/>
            <person name="Ali J."/>
            <person name="Dante M."/>
            <person name="Du F."/>
            <person name="Hou S."/>
            <person name="Layman D."/>
            <person name="Leonard S."/>
            <person name="Nguyen C."/>
            <person name="Scott K."/>
            <person name="Holmes A."/>
            <person name="Grewal N."/>
            <person name="Mulvaney E."/>
            <person name="Ryan E."/>
            <person name="Sun H."/>
            <person name="Florea L."/>
            <person name="Miller W."/>
            <person name="Stoneking T."/>
            <person name="Nhan M."/>
            <person name="Waterston R."/>
            <person name="Wilson R.K."/>
        </authorList>
    </citation>
    <scope>NUCLEOTIDE SEQUENCE [LARGE SCALE GENOMIC DNA]</scope>
    <source>
        <strain>LT2 / SGSC1412 / ATCC 700720</strain>
    </source>
</reference>
<reference key="2">
    <citation type="journal article" date="2009" name="Genes Dev.">
        <title>Caught at its own game: regulatory small RNA inactivated by an inducible transcript mimicking its target.</title>
        <authorList>
            <person name="Figueroa-Bossi N."/>
            <person name="Valentini M."/>
            <person name="Malleret L."/>
            <person name="Fiorini F."/>
            <person name="Bossi L."/>
        </authorList>
    </citation>
    <scope>INDUCTION</scope>
    <scope>GENE NAME</scope>
    <source>
        <strain>LT2 / MA3409</strain>
    </source>
</reference>
<name>CHIQ_SALTY</name>
<sequence>MKKILLIASMTAGLTACASSPAPEEDSRLKEAYSACINTAQGSPEKIEACQSVLNVLKKERRHQQFANEESVRVLDYQQCIQATRTGNDQAVKADCDKVWQEIRSHNNVQ</sequence>
<protein>
    <recommendedName>
        <fullName>Uncharacterized lipoprotein ChiQ</fullName>
    </recommendedName>
</protein>
<dbReference type="EMBL" id="AE006468">
    <property type="protein sequence ID" value="AAL19632.1"/>
    <property type="molecule type" value="Genomic_DNA"/>
</dbReference>
<dbReference type="RefSeq" id="WP_000722261.1">
    <property type="nucleotide sequence ID" value="NC_003197.2"/>
</dbReference>
<dbReference type="STRING" id="99287.STM0688"/>
<dbReference type="PaxDb" id="99287-STM0688"/>
<dbReference type="KEGG" id="stm:STM0688"/>
<dbReference type="PATRIC" id="fig|99287.12.peg.719"/>
<dbReference type="HOGENOM" id="CLU_2192888_0_0_6"/>
<dbReference type="OMA" id="QFAEQET"/>
<dbReference type="PhylomeDB" id="Q8ZQX4"/>
<dbReference type="BioCyc" id="SENT99287:STM0688-MONOMER"/>
<dbReference type="Proteomes" id="UP000001014">
    <property type="component" value="Chromosome"/>
</dbReference>
<dbReference type="GO" id="GO:0005886">
    <property type="term" value="C:plasma membrane"/>
    <property type="evidence" value="ECO:0007669"/>
    <property type="project" value="UniProtKB-SubCell"/>
</dbReference>
<dbReference type="InterPro" id="IPR025727">
    <property type="entry name" value="YbfN-like"/>
</dbReference>
<dbReference type="Pfam" id="PF13982">
    <property type="entry name" value="YbfN"/>
    <property type="match status" value="1"/>
</dbReference>
<dbReference type="PROSITE" id="PS51257">
    <property type="entry name" value="PROKAR_LIPOPROTEIN"/>
    <property type="match status" value="1"/>
</dbReference>
<evidence type="ECO:0000255" key="1">
    <source>
        <dbReference type="PROSITE-ProRule" id="PRU00303"/>
    </source>
</evidence>
<evidence type="ECO:0000269" key="2">
    <source>
    </source>
</evidence>
<evidence type="ECO:0000305" key="3">
    <source>
    </source>
</evidence>
<accession>Q8ZQX4</accession>